<comment type="function">
    <text evidence="1">Peptide chain release factor 1 directs the termination of translation in response to the peptide chain termination codons UAG and UAA.</text>
</comment>
<comment type="subcellular location">
    <subcellularLocation>
        <location evidence="1">Cytoplasm</location>
    </subcellularLocation>
</comment>
<comment type="PTM">
    <text evidence="1">Methylated by PrmC. Methylation increases the termination efficiency of RF1.</text>
</comment>
<comment type="similarity">
    <text evidence="1">Belongs to the prokaryotic/mitochondrial release factor family.</text>
</comment>
<organism>
    <name type="scientific">Sinorhizobium medicae (strain WSM419)</name>
    <name type="common">Ensifer medicae</name>
    <dbReference type="NCBI Taxonomy" id="366394"/>
    <lineage>
        <taxon>Bacteria</taxon>
        <taxon>Pseudomonadati</taxon>
        <taxon>Pseudomonadota</taxon>
        <taxon>Alphaproteobacteria</taxon>
        <taxon>Hyphomicrobiales</taxon>
        <taxon>Rhizobiaceae</taxon>
        <taxon>Sinorhizobium/Ensifer group</taxon>
        <taxon>Sinorhizobium</taxon>
    </lineage>
</organism>
<accession>A6UCF2</accession>
<keyword id="KW-0963">Cytoplasm</keyword>
<keyword id="KW-0488">Methylation</keyword>
<keyword id="KW-0648">Protein biosynthesis</keyword>
<feature type="chain" id="PRO_1000004954" description="Peptide chain release factor 1">
    <location>
        <begin position="1"/>
        <end position="360"/>
    </location>
</feature>
<feature type="region of interest" description="Disordered" evidence="2">
    <location>
        <begin position="281"/>
        <end position="310"/>
    </location>
</feature>
<feature type="compositionally biased region" description="Basic and acidic residues" evidence="2">
    <location>
        <begin position="281"/>
        <end position="307"/>
    </location>
</feature>
<feature type="modified residue" description="N5-methylglutamine" evidence="1">
    <location>
        <position position="235"/>
    </location>
</feature>
<protein>
    <recommendedName>
        <fullName evidence="1">Peptide chain release factor 1</fullName>
        <shortName evidence="1">RF-1</shortName>
    </recommendedName>
</protein>
<name>RF1_SINMW</name>
<proteinExistence type="inferred from homology"/>
<sequence length="360" mass="39951">MAKLPVEKMRELERRFGEIEARMSAGPSADVYVKLASEYSELQPVVSKIRAYEKATAELADIGAMLADRATDKDMRDLAELEKPEIEERVEALEQEIQILLLPKDAADEKSAILEIRAGTGGSEAALFAGDLFRMYERYAAGKGWRVEVLSASEGEAGGYKEIIATVSGRGVFSRLKFESGVHRVQRVPETEAGGRIHTSAATVAVLPEAEDIDIDIRSEDIRVDTMRSSGAGGQHVNTTDSAVRITHLPTGLVVTSSEKSQHQNRAKAMQVLRSRLYDMERQRADSERSADRRNQVGSGDRSERIRTYNFPQGRLTDHRINLTIYKLDRVMEGEIDEIVDALLADYQASQLALLGEKQN</sequence>
<evidence type="ECO:0000255" key="1">
    <source>
        <dbReference type="HAMAP-Rule" id="MF_00093"/>
    </source>
</evidence>
<evidence type="ECO:0000256" key="2">
    <source>
        <dbReference type="SAM" id="MobiDB-lite"/>
    </source>
</evidence>
<gene>
    <name evidence="1" type="primary">prfA</name>
    <name type="ordered locus">Smed_2502</name>
</gene>
<reference key="1">
    <citation type="submission" date="2007-06" db="EMBL/GenBank/DDBJ databases">
        <title>Complete sequence of Sinorhizobium medicae WSM419 chromosome.</title>
        <authorList>
            <consortium name="US DOE Joint Genome Institute"/>
            <person name="Copeland A."/>
            <person name="Lucas S."/>
            <person name="Lapidus A."/>
            <person name="Barry K."/>
            <person name="Glavina del Rio T."/>
            <person name="Dalin E."/>
            <person name="Tice H."/>
            <person name="Pitluck S."/>
            <person name="Chain P."/>
            <person name="Malfatti S."/>
            <person name="Shin M."/>
            <person name="Vergez L."/>
            <person name="Schmutz J."/>
            <person name="Larimer F."/>
            <person name="Land M."/>
            <person name="Hauser L."/>
            <person name="Kyrpides N."/>
            <person name="Mikhailova N."/>
            <person name="Reeve W.G."/>
            <person name="Richardson P."/>
        </authorList>
    </citation>
    <scope>NUCLEOTIDE SEQUENCE [LARGE SCALE GENOMIC DNA]</scope>
    <source>
        <strain>WSM419</strain>
    </source>
</reference>
<dbReference type="EMBL" id="CP000738">
    <property type="protein sequence ID" value="ABR61332.1"/>
    <property type="molecule type" value="Genomic_DNA"/>
</dbReference>
<dbReference type="RefSeq" id="WP_012066723.1">
    <property type="nucleotide sequence ID" value="NC_009636.1"/>
</dbReference>
<dbReference type="RefSeq" id="YP_001328167.1">
    <property type="nucleotide sequence ID" value="NC_009636.1"/>
</dbReference>
<dbReference type="SMR" id="A6UCF2"/>
<dbReference type="STRING" id="366394.Smed_2502"/>
<dbReference type="GeneID" id="61611971"/>
<dbReference type="KEGG" id="smd:Smed_2502"/>
<dbReference type="PATRIC" id="fig|366394.8.peg.5691"/>
<dbReference type="eggNOG" id="COG0216">
    <property type="taxonomic scope" value="Bacteria"/>
</dbReference>
<dbReference type="HOGENOM" id="CLU_036856_0_1_5"/>
<dbReference type="OrthoDB" id="9806673at2"/>
<dbReference type="Proteomes" id="UP000001108">
    <property type="component" value="Chromosome"/>
</dbReference>
<dbReference type="GO" id="GO:0005737">
    <property type="term" value="C:cytoplasm"/>
    <property type="evidence" value="ECO:0007669"/>
    <property type="project" value="UniProtKB-SubCell"/>
</dbReference>
<dbReference type="GO" id="GO:0016149">
    <property type="term" value="F:translation release factor activity, codon specific"/>
    <property type="evidence" value="ECO:0007669"/>
    <property type="project" value="UniProtKB-UniRule"/>
</dbReference>
<dbReference type="FunFam" id="3.30.160.20:FF:000004">
    <property type="entry name" value="Peptide chain release factor 1"/>
    <property type="match status" value="1"/>
</dbReference>
<dbReference type="FunFam" id="3.30.70.1660:FF:000002">
    <property type="entry name" value="Peptide chain release factor 1"/>
    <property type="match status" value="1"/>
</dbReference>
<dbReference type="FunFam" id="3.30.70.1660:FF:000004">
    <property type="entry name" value="Peptide chain release factor 1"/>
    <property type="match status" value="1"/>
</dbReference>
<dbReference type="Gene3D" id="3.30.160.20">
    <property type="match status" value="1"/>
</dbReference>
<dbReference type="Gene3D" id="3.30.70.1660">
    <property type="match status" value="2"/>
</dbReference>
<dbReference type="Gene3D" id="6.10.140.1950">
    <property type="match status" value="1"/>
</dbReference>
<dbReference type="HAMAP" id="MF_00093">
    <property type="entry name" value="Rel_fac_1"/>
    <property type="match status" value="1"/>
</dbReference>
<dbReference type="InterPro" id="IPR005139">
    <property type="entry name" value="PCRF"/>
</dbReference>
<dbReference type="InterPro" id="IPR000352">
    <property type="entry name" value="Pep_chain_release_fac_I"/>
</dbReference>
<dbReference type="InterPro" id="IPR045853">
    <property type="entry name" value="Pep_chain_release_fac_I_sf"/>
</dbReference>
<dbReference type="InterPro" id="IPR050057">
    <property type="entry name" value="Prokaryotic/Mito_RF"/>
</dbReference>
<dbReference type="InterPro" id="IPR004373">
    <property type="entry name" value="RF-1"/>
</dbReference>
<dbReference type="NCBIfam" id="TIGR00019">
    <property type="entry name" value="prfA"/>
    <property type="match status" value="1"/>
</dbReference>
<dbReference type="NCBIfam" id="NF001859">
    <property type="entry name" value="PRK00591.1"/>
    <property type="match status" value="1"/>
</dbReference>
<dbReference type="PANTHER" id="PTHR43804">
    <property type="entry name" value="LD18447P"/>
    <property type="match status" value="1"/>
</dbReference>
<dbReference type="PANTHER" id="PTHR43804:SF7">
    <property type="entry name" value="LD18447P"/>
    <property type="match status" value="1"/>
</dbReference>
<dbReference type="Pfam" id="PF03462">
    <property type="entry name" value="PCRF"/>
    <property type="match status" value="1"/>
</dbReference>
<dbReference type="Pfam" id="PF00472">
    <property type="entry name" value="RF-1"/>
    <property type="match status" value="1"/>
</dbReference>
<dbReference type="SMART" id="SM00937">
    <property type="entry name" value="PCRF"/>
    <property type="match status" value="1"/>
</dbReference>
<dbReference type="SUPFAM" id="SSF75620">
    <property type="entry name" value="Release factor"/>
    <property type="match status" value="1"/>
</dbReference>
<dbReference type="PROSITE" id="PS00745">
    <property type="entry name" value="RF_PROK_I"/>
    <property type="match status" value="1"/>
</dbReference>